<feature type="chain" id="PRO_1000130320" description="Ribosomal RNA small subunit methyltransferase A">
    <location>
        <begin position="1"/>
        <end position="273"/>
    </location>
</feature>
<feature type="binding site" evidence="1">
    <location>
        <position position="18"/>
    </location>
    <ligand>
        <name>S-adenosyl-L-methionine</name>
        <dbReference type="ChEBI" id="CHEBI:59789"/>
    </ligand>
</feature>
<feature type="binding site" evidence="1">
    <location>
        <position position="20"/>
    </location>
    <ligand>
        <name>S-adenosyl-L-methionine</name>
        <dbReference type="ChEBI" id="CHEBI:59789"/>
    </ligand>
</feature>
<feature type="binding site" evidence="1">
    <location>
        <position position="45"/>
    </location>
    <ligand>
        <name>S-adenosyl-L-methionine</name>
        <dbReference type="ChEBI" id="CHEBI:59789"/>
    </ligand>
</feature>
<feature type="binding site" evidence="1">
    <location>
        <position position="66"/>
    </location>
    <ligand>
        <name>S-adenosyl-L-methionine</name>
        <dbReference type="ChEBI" id="CHEBI:59789"/>
    </ligand>
</feature>
<feature type="binding site" evidence="1">
    <location>
        <position position="91"/>
    </location>
    <ligand>
        <name>S-adenosyl-L-methionine</name>
        <dbReference type="ChEBI" id="CHEBI:59789"/>
    </ligand>
</feature>
<feature type="binding site" evidence="1">
    <location>
        <position position="113"/>
    </location>
    <ligand>
        <name>S-adenosyl-L-methionine</name>
        <dbReference type="ChEBI" id="CHEBI:59789"/>
    </ligand>
</feature>
<protein>
    <recommendedName>
        <fullName evidence="1">Ribosomal RNA small subunit methyltransferase A</fullName>
        <ecNumber evidence="1">2.1.1.182</ecNumber>
    </recommendedName>
    <alternativeName>
        <fullName evidence="1">16S rRNA (adenine(1518)-N(6)/adenine(1519)-N(6))-dimethyltransferase</fullName>
    </alternativeName>
    <alternativeName>
        <fullName evidence="1">16S rRNA dimethyladenosine transferase</fullName>
    </alternativeName>
    <alternativeName>
        <fullName evidence="1">16S rRNA dimethylase</fullName>
    </alternativeName>
    <alternativeName>
        <fullName evidence="1">S-adenosylmethionine-6-N', N'-adenosyl(rRNA) dimethyltransferase</fullName>
    </alternativeName>
</protein>
<evidence type="ECO:0000255" key="1">
    <source>
        <dbReference type="HAMAP-Rule" id="MF_00607"/>
    </source>
</evidence>
<gene>
    <name evidence="1" type="primary">rsmA</name>
    <name evidence="1" type="synonym">ksgA</name>
    <name type="ordered locus">SeSA_A0101</name>
</gene>
<accession>B4TWT6</accession>
<sequence length="273" mass="30546">MNNRVHQGHLARKRFGQNFLNDRFVIDSIVSAINPQKGQAMVEIGPGLAALTEPVGERLDKLTVIELDRDLAARLQTHPFLGPKLTIYQQDAMTMNFGELSTQLGQPLRVFGNLPYNISTPLMFHLFSYTDAIADMHFMLQKEVVNRLVAGPNSKAYGRLSVMAQYYCQVIPVLEVPPSAFTPPPKVDSAVVRLVPHATMPYPVKDIRVLSRITTEAFNQRRKTIRNSLGNLFSVETLTEMGIDPAMRAENISVAQYCQMANYLSENAPLKES</sequence>
<name>RSMA_SALSV</name>
<reference key="1">
    <citation type="journal article" date="2011" name="J. Bacteriol.">
        <title>Comparative genomics of 28 Salmonella enterica isolates: evidence for CRISPR-mediated adaptive sublineage evolution.</title>
        <authorList>
            <person name="Fricke W.F."/>
            <person name="Mammel M.K."/>
            <person name="McDermott P.F."/>
            <person name="Tartera C."/>
            <person name="White D.G."/>
            <person name="Leclerc J.E."/>
            <person name="Ravel J."/>
            <person name="Cebula T.A."/>
        </authorList>
    </citation>
    <scope>NUCLEOTIDE SEQUENCE [LARGE SCALE GENOMIC DNA]</scope>
    <source>
        <strain>CVM19633</strain>
    </source>
</reference>
<keyword id="KW-0963">Cytoplasm</keyword>
<keyword id="KW-0489">Methyltransferase</keyword>
<keyword id="KW-0694">RNA-binding</keyword>
<keyword id="KW-0698">rRNA processing</keyword>
<keyword id="KW-0949">S-adenosyl-L-methionine</keyword>
<keyword id="KW-0808">Transferase</keyword>
<comment type="function">
    <text evidence="1">Specifically dimethylates two adjacent adenosines (A1518 and A1519) in the loop of a conserved hairpin near the 3'-end of 16S rRNA in the 30S particle. May play a critical role in biogenesis of 30S subunits.</text>
</comment>
<comment type="catalytic activity">
    <reaction evidence="1">
        <text>adenosine(1518)/adenosine(1519) in 16S rRNA + 4 S-adenosyl-L-methionine = N(6)-dimethyladenosine(1518)/N(6)-dimethyladenosine(1519) in 16S rRNA + 4 S-adenosyl-L-homocysteine + 4 H(+)</text>
        <dbReference type="Rhea" id="RHEA:19609"/>
        <dbReference type="Rhea" id="RHEA-COMP:10232"/>
        <dbReference type="Rhea" id="RHEA-COMP:10233"/>
        <dbReference type="ChEBI" id="CHEBI:15378"/>
        <dbReference type="ChEBI" id="CHEBI:57856"/>
        <dbReference type="ChEBI" id="CHEBI:59789"/>
        <dbReference type="ChEBI" id="CHEBI:74411"/>
        <dbReference type="ChEBI" id="CHEBI:74493"/>
        <dbReference type="EC" id="2.1.1.182"/>
    </reaction>
</comment>
<comment type="subcellular location">
    <subcellularLocation>
        <location evidence="1">Cytoplasm</location>
    </subcellularLocation>
</comment>
<comment type="similarity">
    <text evidence="1">Belongs to the class I-like SAM-binding methyltransferase superfamily. rRNA adenine N(6)-methyltransferase family. RsmA subfamily.</text>
</comment>
<organism>
    <name type="scientific">Salmonella schwarzengrund (strain CVM19633)</name>
    <dbReference type="NCBI Taxonomy" id="439843"/>
    <lineage>
        <taxon>Bacteria</taxon>
        <taxon>Pseudomonadati</taxon>
        <taxon>Pseudomonadota</taxon>
        <taxon>Gammaproteobacteria</taxon>
        <taxon>Enterobacterales</taxon>
        <taxon>Enterobacteriaceae</taxon>
        <taxon>Salmonella</taxon>
    </lineage>
</organism>
<proteinExistence type="inferred from homology"/>
<dbReference type="EC" id="2.1.1.182" evidence="1"/>
<dbReference type="EMBL" id="CP001127">
    <property type="protein sequence ID" value="ACF89590.1"/>
    <property type="molecule type" value="Genomic_DNA"/>
</dbReference>
<dbReference type="RefSeq" id="WP_001065402.1">
    <property type="nucleotide sequence ID" value="NC_011094.1"/>
</dbReference>
<dbReference type="SMR" id="B4TWT6"/>
<dbReference type="KEGG" id="sew:SeSA_A0101"/>
<dbReference type="HOGENOM" id="CLU_041220_0_1_6"/>
<dbReference type="Proteomes" id="UP000001865">
    <property type="component" value="Chromosome"/>
</dbReference>
<dbReference type="GO" id="GO:0005829">
    <property type="term" value="C:cytosol"/>
    <property type="evidence" value="ECO:0007669"/>
    <property type="project" value="TreeGrafter"/>
</dbReference>
<dbReference type="GO" id="GO:0052908">
    <property type="term" value="F:16S rRNA (adenine(1518)-N(6)/adenine(1519)-N(6))-dimethyltransferase activity"/>
    <property type="evidence" value="ECO:0007669"/>
    <property type="project" value="UniProtKB-EC"/>
</dbReference>
<dbReference type="GO" id="GO:0003723">
    <property type="term" value="F:RNA binding"/>
    <property type="evidence" value="ECO:0007669"/>
    <property type="project" value="UniProtKB-KW"/>
</dbReference>
<dbReference type="FunFam" id="1.10.8.100:FF:000001">
    <property type="entry name" value="Ribosomal RNA small subunit methyltransferase A"/>
    <property type="match status" value="1"/>
</dbReference>
<dbReference type="FunFam" id="3.40.50.150:FF:000006">
    <property type="entry name" value="Ribosomal RNA small subunit methyltransferase A"/>
    <property type="match status" value="1"/>
</dbReference>
<dbReference type="Gene3D" id="1.10.8.100">
    <property type="entry name" value="Ribosomal RNA adenine dimethylase-like, domain 2"/>
    <property type="match status" value="1"/>
</dbReference>
<dbReference type="Gene3D" id="3.40.50.150">
    <property type="entry name" value="Vaccinia Virus protein VP39"/>
    <property type="match status" value="1"/>
</dbReference>
<dbReference type="HAMAP" id="MF_00607">
    <property type="entry name" value="16SrRNA_methyltr_A"/>
    <property type="match status" value="1"/>
</dbReference>
<dbReference type="InterPro" id="IPR001737">
    <property type="entry name" value="KsgA/Erm"/>
</dbReference>
<dbReference type="InterPro" id="IPR023165">
    <property type="entry name" value="rRNA_Ade_diMease-like_C"/>
</dbReference>
<dbReference type="InterPro" id="IPR020596">
    <property type="entry name" value="rRNA_Ade_Mease_Trfase_CS"/>
</dbReference>
<dbReference type="InterPro" id="IPR020598">
    <property type="entry name" value="rRNA_Ade_methylase_Trfase_N"/>
</dbReference>
<dbReference type="InterPro" id="IPR011530">
    <property type="entry name" value="rRNA_adenine_dimethylase"/>
</dbReference>
<dbReference type="InterPro" id="IPR029063">
    <property type="entry name" value="SAM-dependent_MTases_sf"/>
</dbReference>
<dbReference type="NCBIfam" id="TIGR00755">
    <property type="entry name" value="ksgA"/>
    <property type="match status" value="1"/>
</dbReference>
<dbReference type="PANTHER" id="PTHR11727">
    <property type="entry name" value="DIMETHYLADENOSINE TRANSFERASE"/>
    <property type="match status" value="1"/>
</dbReference>
<dbReference type="PANTHER" id="PTHR11727:SF7">
    <property type="entry name" value="DIMETHYLADENOSINE TRANSFERASE-RELATED"/>
    <property type="match status" value="1"/>
</dbReference>
<dbReference type="Pfam" id="PF00398">
    <property type="entry name" value="RrnaAD"/>
    <property type="match status" value="1"/>
</dbReference>
<dbReference type="SMART" id="SM00650">
    <property type="entry name" value="rADc"/>
    <property type="match status" value="1"/>
</dbReference>
<dbReference type="SUPFAM" id="SSF53335">
    <property type="entry name" value="S-adenosyl-L-methionine-dependent methyltransferases"/>
    <property type="match status" value="1"/>
</dbReference>
<dbReference type="PROSITE" id="PS01131">
    <property type="entry name" value="RRNA_A_DIMETH"/>
    <property type="match status" value="1"/>
</dbReference>
<dbReference type="PROSITE" id="PS51689">
    <property type="entry name" value="SAM_RNA_A_N6_MT"/>
    <property type="match status" value="1"/>
</dbReference>